<gene>
    <name evidence="1" type="primary">miaA</name>
    <name type="ordered locus">RB1507</name>
</gene>
<keyword id="KW-0067">ATP-binding</keyword>
<keyword id="KW-0460">Magnesium</keyword>
<keyword id="KW-0547">Nucleotide-binding</keyword>
<keyword id="KW-1185">Reference proteome</keyword>
<keyword id="KW-0808">Transferase</keyword>
<keyword id="KW-0819">tRNA processing</keyword>
<protein>
    <recommendedName>
        <fullName evidence="1">tRNA dimethylallyltransferase</fullName>
        <ecNumber evidence="1">2.5.1.75</ecNumber>
    </recommendedName>
    <alternativeName>
        <fullName evidence="1">Dimethylallyl diphosphate:tRNA dimethylallyltransferase</fullName>
        <shortName evidence="1">DMAPP:tRNA dimethylallyltransferase</shortName>
        <shortName evidence="1">DMATase</shortName>
    </alternativeName>
    <alternativeName>
        <fullName evidence="1">Isopentenyl-diphosphate:tRNA isopentenyltransferase</fullName>
        <shortName evidence="1">IPP transferase</shortName>
        <shortName evidence="1">IPPT</shortName>
        <shortName evidence="1">IPTase</shortName>
    </alternativeName>
</protein>
<accession>Q7TU09</accession>
<organism>
    <name type="scientific">Rhodopirellula baltica (strain DSM 10527 / NCIMB 13988 / SH1)</name>
    <dbReference type="NCBI Taxonomy" id="243090"/>
    <lineage>
        <taxon>Bacteria</taxon>
        <taxon>Pseudomonadati</taxon>
        <taxon>Planctomycetota</taxon>
        <taxon>Planctomycetia</taxon>
        <taxon>Pirellulales</taxon>
        <taxon>Pirellulaceae</taxon>
        <taxon>Rhodopirellula</taxon>
    </lineage>
</organism>
<sequence>MHPDTRSQPFAPLFDDVIVLTGPTASGKTELALRVAETLAARTNGRQEIEILSLDAIAVYRGMDIGSAKPTSDQLARAPHHLIDLVDPWDEFSVAEYLHSAHACVQDILERSKRPMFVGGTPMYLKGVLRGFDAGPPADEAFRNAVEEDLRQHGIGALRERLHQVDPLSAAKIDRGDSRRMIRALEFARATGTPISHRQLQFDTARSSHEGLVFALRVPRPVLHQRIEKRVEEMFAEGLVAEVQGLLALEQPLSKTSRQAVGYREIIEAIAAGDAPETAAERVVFHTRRLARRQETWLRSFSEIRGLGSFESDSAPDIDQCVESMVETILSFSD</sequence>
<proteinExistence type="inferred from homology"/>
<evidence type="ECO:0000255" key="1">
    <source>
        <dbReference type="HAMAP-Rule" id="MF_00185"/>
    </source>
</evidence>
<feature type="chain" id="PRO_0000163963" description="tRNA dimethylallyltransferase">
    <location>
        <begin position="1"/>
        <end position="334"/>
    </location>
</feature>
<feature type="binding site" evidence="1">
    <location>
        <begin position="22"/>
        <end position="29"/>
    </location>
    <ligand>
        <name>ATP</name>
        <dbReference type="ChEBI" id="CHEBI:30616"/>
    </ligand>
</feature>
<feature type="binding site" evidence="1">
    <location>
        <begin position="24"/>
        <end position="29"/>
    </location>
    <ligand>
        <name>substrate</name>
    </ligand>
</feature>
<feature type="site" description="Interaction with substrate tRNA" evidence="1">
    <location>
        <position position="121"/>
    </location>
</feature>
<feature type="site" description="Interaction with substrate tRNA" evidence="1">
    <location>
        <position position="143"/>
    </location>
</feature>
<dbReference type="EC" id="2.5.1.75" evidence="1"/>
<dbReference type="EMBL" id="BX294135">
    <property type="protein sequence ID" value="CAD72129.1"/>
    <property type="molecule type" value="Genomic_DNA"/>
</dbReference>
<dbReference type="RefSeq" id="NP_864450.1">
    <property type="nucleotide sequence ID" value="NC_005027.1"/>
</dbReference>
<dbReference type="RefSeq" id="WP_011118401.1">
    <property type="nucleotide sequence ID" value="NC_005027.1"/>
</dbReference>
<dbReference type="SMR" id="Q7TU09"/>
<dbReference type="FunCoup" id="Q7TU09">
    <property type="interactions" value="458"/>
</dbReference>
<dbReference type="STRING" id="243090.RB1507"/>
<dbReference type="EnsemblBacteria" id="CAD72129">
    <property type="protein sequence ID" value="CAD72129"/>
    <property type="gene ID" value="RB1507"/>
</dbReference>
<dbReference type="KEGG" id="rba:RB1507"/>
<dbReference type="PATRIC" id="fig|243090.15.peg.703"/>
<dbReference type="eggNOG" id="COG0324">
    <property type="taxonomic scope" value="Bacteria"/>
</dbReference>
<dbReference type="HOGENOM" id="CLU_032616_0_1_0"/>
<dbReference type="InParanoid" id="Q7TU09"/>
<dbReference type="OrthoDB" id="9776390at2"/>
<dbReference type="Proteomes" id="UP000001025">
    <property type="component" value="Chromosome"/>
</dbReference>
<dbReference type="GO" id="GO:0005524">
    <property type="term" value="F:ATP binding"/>
    <property type="evidence" value="ECO:0007669"/>
    <property type="project" value="UniProtKB-UniRule"/>
</dbReference>
<dbReference type="GO" id="GO:0052381">
    <property type="term" value="F:tRNA dimethylallyltransferase activity"/>
    <property type="evidence" value="ECO:0000318"/>
    <property type="project" value="GO_Central"/>
</dbReference>
<dbReference type="GO" id="GO:0006400">
    <property type="term" value="P:tRNA modification"/>
    <property type="evidence" value="ECO:0000318"/>
    <property type="project" value="GO_Central"/>
</dbReference>
<dbReference type="FunFam" id="1.10.20.140:FF:000001">
    <property type="entry name" value="tRNA dimethylallyltransferase"/>
    <property type="match status" value="1"/>
</dbReference>
<dbReference type="Gene3D" id="1.10.20.140">
    <property type="match status" value="1"/>
</dbReference>
<dbReference type="Gene3D" id="3.40.50.300">
    <property type="entry name" value="P-loop containing nucleotide triphosphate hydrolases"/>
    <property type="match status" value="1"/>
</dbReference>
<dbReference type="HAMAP" id="MF_00185">
    <property type="entry name" value="IPP_trans"/>
    <property type="match status" value="1"/>
</dbReference>
<dbReference type="InterPro" id="IPR039657">
    <property type="entry name" value="Dimethylallyltransferase"/>
</dbReference>
<dbReference type="InterPro" id="IPR018022">
    <property type="entry name" value="IPT"/>
</dbReference>
<dbReference type="InterPro" id="IPR027417">
    <property type="entry name" value="P-loop_NTPase"/>
</dbReference>
<dbReference type="NCBIfam" id="TIGR00174">
    <property type="entry name" value="miaA"/>
    <property type="match status" value="1"/>
</dbReference>
<dbReference type="PANTHER" id="PTHR11088">
    <property type="entry name" value="TRNA DIMETHYLALLYLTRANSFERASE"/>
    <property type="match status" value="1"/>
</dbReference>
<dbReference type="PANTHER" id="PTHR11088:SF60">
    <property type="entry name" value="TRNA DIMETHYLALLYLTRANSFERASE"/>
    <property type="match status" value="1"/>
</dbReference>
<dbReference type="Pfam" id="PF01715">
    <property type="entry name" value="IPPT"/>
    <property type="match status" value="1"/>
</dbReference>
<dbReference type="SUPFAM" id="SSF52540">
    <property type="entry name" value="P-loop containing nucleoside triphosphate hydrolases"/>
    <property type="match status" value="2"/>
</dbReference>
<name>MIAA_RHOBA</name>
<reference key="1">
    <citation type="journal article" date="2003" name="Proc. Natl. Acad. Sci. U.S.A.">
        <title>Complete genome sequence of the marine planctomycete Pirellula sp. strain 1.</title>
        <authorList>
            <person name="Gloeckner F.O."/>
            <person name="Kube M."/>
            <person name="Bauer M."/>
            <person name="Teeling H."/>
            <person name="Lombardot T."/>
            <person name="Ludwig W."/>
            <person name="Gade D."/>
            <person name="Beck A."/>
            <person name="Borzym K."/>
            <person name="Heitmann K."/>
            <person name="Rabus R."/>
            <person name="Schlesner H."/>
            <person name="Amann R."/>
            <person name="Reinhardt R."/>
        </authorList>
    </citation>
    <scope>NUCLEOTIDE SEQUENCE [LARGE SCALE GENOMIC DNA]</scope>
    <source>
        <strain>DSM 10527 / NCIMB 13988 / SH1</strain>
    </source>
</reference>
<comment type="function">
    <text evidence="1">Catalyzes the transfer of a dimethylallyl group onto the adenine at position 37 in tRNAs that read codons beginning with uridine, leading to the formation of N6-(dimethylallyl)adenosine (i(6)A).</text>
</comment>
<comment type="catalytic activity">
    <reaction evidence="1">
        <text>adenosine(37) in tRNA + dimethylallyl diphosphate = N(6)-dimethylallyladenosine(37) in tRNA + diphosphate</text>
        <dbReference type="Rhea" id="RHEA:26482"/>
        <dbReference type="Rhea" id="RHEA-COMP:10162"/>
        <dbReference type="Rhea" id="RHEA-COMP:10375"/>
        <dbReference type="ChEBI" id="CHEBI:33019"/>
        <dbReference type="ChEBI" id="CHEBI:57623"/>
        <dbReference type="ChEBI" id="CHEBI:74411"/>
        <dbReference type="ChEBI" id="CHEBI:74415"/>
        <dbReference type="EC" id="2.5.1.75"/>
    </reaction>
</comment>
<comment type="cofactor">
    <cofactor evidence="1">
        <name>Mg(2+)</name>
        <dbReference type="ChEBI" id="CHEBI:18420"/>
    </cofactor>
</comment>
<comment type="subunit">
    <text evidence="1">Monomer.</text>
</comment>
<comment type="similarity">
    <text evidence="1">Belongs to the IPP transferase family.</text>
</comment>